<organismHost>
    <name type="scientific">Haloarcula hispanica</name>
    <dbReference type="NCBI Taxonomy" id="51589"/>
</organismHost>
<proteinExistence type="predicted"/>
<dbReference type="EMBL" id="AF191796">
    <property type="protein sequence ID" value="AAQ13725.1"/>
    <property type="molecule type" value="Genomic_DNA"/>
</dbReference>
<dbReference type="RefSeq" id="YP_529518.1">
    <property type="nucleotide sequence ID" value="NC_007914.1"/>
</dbReference>
<dbReference type="KEGG" id="vg:5142412"/>
<dbReference type="Proteomes" id="UP000007024">
    <property type="component" value="Segment"/>
</dbReference>
<organism>
    <name type="scientific">His1 virus (isolate Australia/Victoria)</name>
    <name type="common">His1V</name>
    <name type="synonym">Haloarcula hispanica virus 1</name>
    <dbReference type="NCBI Taxonomy" id="654912"/>
    <lineage>
        <taxon>Viruses</taxon>
        <taxon>Viruses incertae sedis</taxon>
        <taxon>Halspiviridae</taxon>
        <taxon>Salterprovirus</taxon>
        <taxon>Salterprovirus His1</taxon>
    </lineage>
</organism>
<name>Y006_HIS1I</name>
<gene>
    <name type="ORF">ORF6</name>
</gene>
<reference key="1">
    <citation type="journal article" date="2006" name="Virology">
        <title>His1 and His2 are distantly related, spindle-shaped haloviruses belonging to the novel virus group, Salterprovirus.</title>
        <authorList>
            <person name="Bath C."/>
            <person name="Cukalac T."/>
            <person name="Porter K."/>
            <person name="Dyall-Smith M.L."/>
        </authorList>
    </citation>
    <scope>NUCLEOTIDE SEQUENCE [GENOMIC DNA]</scope>
</reference>
<accession>Q25BI9</accession>
<feature type="chain" id="PRO_0000384876" description="Uncharacterized protein ORF6">
    <location>
        <begin position="1"/>
        <end position="29"/>
    </location>
</feature>
<keyword id="KW-1185">Reference proteome</keyword>
<sequence length="29" mass="3242">MLTVKIINGDGAIDKHLTLNEKEAFKKTI</sequence>
<protein>
    <recommendedName>
        <fullName>Uncharacterized protein ORF6</fullName>
    </recommendedName>
</protein>